<dbReference type="EC" id="2.3.1.109" evidence="1"/>
<dbReference type="EMBL" id="CP000036">
    <property type="protein sequence ID" value="ABB65969.1"/>
    <property type="molecule type" value="Genomic_DNA"/>
</dbReference>
<dbReference type="RefSeq" id="WP_000989402.1">
    <property type="nucleotide sequence ID" value="NC_007613.1"/>
</dbReference>
<dbReference type="SMR" id="Q321N9"/>
<dbReference type="KEGG" id="sbo:SBO_1343"/>
<dbReference type="HOGENOM" id="CLU_057655_0_0_6"/>
<dbReference type="UniPathway" id="UPA00185">
    <property type="reaction ID" value="UER00279"/>
</dbReference>
<dbReference type="Proteomes" id="UP000007067">
    <property type="component" value="Chromosome"/>
</dbReference>
<dbReference type="GO" id="GO:0008791">
    <property type="term" value="F:arginine N-succinyltransferase activity"/>
    <property type="evidence" value="ECO:0007669"/>
    <property type="project" value="UniProtKB-UniRule"/>
</dbReference>
<dbReference type="GO" id="GO:0019544">
    <property type="term" value="P:arginine catabolic process to glutamate"/>
    <property type="evidence" value="ECO:0007669"/>
    <property type="project" value="UniProtKB-UniRule"/>
</dbReference>
<dbReference type="GO" id="GO:0019545">
    <property type="term" value="P:arginine catabolic process to succinate"/>
    <property type="evidence" value="ECO:0007669"/>
    <property type="project" value="UniProtKB-UniRule"/>
</dbReference>
<dbReference type="Gene3D" id="2.40.40.20">
    <property type="match status" value="1"/>
</dbReference>
<dbReference type="Gene3D" id="3.40.630.30">
    <property type="match status" value="1"/>
</dbReference>
<dbReference type="HAMAP" id="MF_01171">
    <property type="entry name" value="AstA"/>
    <property type="match status" value="1"/>
</dbReference>
<dbReference type="InterPro" id="IPR016181">
    <property type="entry name" value="Acyl_CoA_acyltransferase"/>
</dbReference>
<dbReference type="InterPro" id="IPR007041">
    <property type="entry name" value="Arg_succinylTrfase_AstA/AruG"/>
</dbReference>
<dbReference type="InterPro" id="IPR017650">
    <property type="entry name" value="Arginine_N-succinylTrfase"/>
</dbReference>
<dbReference type="NCBIfam" id="TIGR03243">
    <property type="entry name" value="arg_catab_AOST"/>
    <property type="match status" value="1"/>
</dbReference>
<dbReference type="NCBIfam" id="TIGR03244">
    <property type="entry name" value="arg_catab_AstA"/>
    <property type="match status" value="1"/>
</dbReference>
<dbReference type="NCBIfam" id="NF007770">
    <property type="entry name" value="PRK10456.1"/>
    <property type="match status" value="1"/>
</dbReference>
<dbReference type="PANTHER" id="PTHR30420:SF1">
    <property type="entry name" value="ARGININE N-SUCCINYLTRANSFERASE"/>
    <property type="match status" value="1"/>
</dbReference>
<dbReference type="PANTHER" id="PTHR30420">
    <property type="entry name" value="N-SUCCINYLARGININE DIHYDROLASE"/>
    <property type="match status" value="1"/>
</dbReference>
<dbReference type="Pfam" id="PF04958">
    <property type="entry name" value="AstA"/>
    <property type="match status" value="1"/>
</dbReference>
<dbReference type="SUPFAM" id="SSF55729">
    <property type="entry name" value="Acyl-CoA N-acyltransferases (Nat)"/>
    <property type="match status" value="1"/>
</dbReference>
<gene>
    <name evidence="1" type="primary">astA</name>
    <name type="ordered locus">SBO_1343</name>
</gene>
<protein>
    <recommendedName>
        <fullName evidence="1">Arginine N-succinyltransferase</fullName>
        <shortName evidence="1">AST</shortName>
        <ecNumber evidence="1">2.3.1.109</ecNumber>
    </recommendedName>
    <alternativeName>
        <fullName evidence="1">AOST</fullName>
    </alternativeName>
</protein>
<name>ASTA_SHIBS</name>
<proteinExistence type="inferred from homology"/>
<comment type="function">
    <text evidence="1">Catalyzes the transfer of succinyl-CoA to arginine to produce N(2)-succinylarginine.</text>
</comment>
<comment type="catalytic activity">
    <reaction evidence="1">
        <text>succinyl-CoA + L-arginine = N(2)-succinyl-L-arginine + CoA + H(+)</text>
        <dbReference type="Rhea" id="RHEA:15185"/>
        <dbReference type="ChEBI" id="CHEBI:15378"/>
        <dbReference type="ChEBI" id="CHEBI:32682"/>
        <dbReference type="ChEBI" id="CHEBI:57287"/>
        <dbReference type="ChEBI" id="CHEBI:57292"/>
        <dbReference type="ChEBI" id="CHEBI:58241"/>
        <dbReference type="EC" id="2.3.1.109"/>
    </reaction>
</comment>
<comment type="pathway">
    <text evidence="1">Amino-acid degradation; L-arginine degradation via AST pathway; L-glutamate and succinate from L-arginine: step 1/5.</text>
</comment>
<comment type="similarity">
    <text evidence="1">Belongs to the arginine N-succinyltransferase family.</text>
</comment>
<feature type="chain" id="PRO_0000262330" description="Arginine N-succinyltransferase">
    <location>
        <begin position="1"/>
        <end position="344"/>
    </location>
</feature>
<feature type="active site" description="Proton donor" evidence="1">
    <location>
        <position position="229"/>
    </location>
</feature>
<feature type="binding site" evidence="1">
    <location>
        <position position="125"/>
    </location>
    <ligand>
        <name>succinyl-CoA</name>
        <dbReference type="ChEBI" id="CHEBI:57292"/>
    </ligand>
</feature>
<evidence type="ECO:0000255" key="1">
    <source>
        <dbReference type="HAMAP-Rule" id="MF_01171"/>
    </source>
</evidence>
<sequence>MMVIRPVERSDVSALMQLASKTGGGLTSLPANEATLSARIERAIKTWQGELPKSEQGYVFVLEDSETGTVAGICAIEVAVGLNDPWHNYRVGTLVHASKELNVYNALPTLFLSNDHTGSSELCTLFLDPDWRKEGNGYLLSKSRFMFMAAFRDKFNDKVVAEMRGVIDEHGYSPFWQSLGKRFFSMDFSRADFLCGTGQKAFIAELMPKHPIYTHFLSQEAQDVIGQVHPQTAPARAVLEKEGFRYRNYIDIFDGGPTLECDIDRVRAIRKSRLVEVAEGQPAQGDFPACLVANENYHHFRVVLARTDPATERLILTAAQLDALKCHAGDRVRLVRLCAVEKTA</sequence>
<keyword id="KW-0012">Acyltransferase</keyword>
<keyword id="KW-0056">Arginine metabolism</keyword>
<keyword id="KW-0808">Transferase</keyword>
<reference key="1">
    <citation type="journal article" date="2005" name="Nucleic Acids Res.">
        <title>Genome dynamics and diversity of Shigella species, the etiologic agents of bacillary dysentery.</title>
        <authorList>
            <person name="Yang F."/>
            <person name="Yang J."/>
            <person name="Zhang X."/>
            <person name="Chen L."/>
            <person name="Jiang Y."/>
            <person name="Yan Y."/>
            <person name="Tang X."/>
            <person name="Wang J."/>
            <person name="Xiong Z."/>
            <person name="Dong J."/>
            <person name="Xue Y."/>
            <person name="Zhu Y."/>
            <person name="Xu X."/>
            <person name="Sun L."/>
            <person name="Chen S."/>
            <person name="Nie H."/>
            <person name="Peng J."/>
            <person name="Xu J."/>
            <person name="Wang Y."/>
            <person name="Yuan Z."/>
            <person name="Wen Y."/>
            <person name="Yao Z."/>
            <person name="Shen Y."/>
            <person name="Qiang B."/>
            <person name="Hou Y."/>
            <person name="Yu J."/>
            <person name="Jin Q."/>
        </authorList>
    </citation>
    <scope>NUCLEOTIDE SEQUENCE [LARGE SCALE GENOMIC DNA]</scope>
    <source>
        <strain>Sb227</strain>
    </source>
</reference>
<accession>Q321N9</accession>
<organism>
    <name type="scientific">Shigella boydii serotype 4 (strain Sb227)</name>
    <dbReference type="NCBI Taxonomy" id="300268"/>
    <lineage>
        <taxon>Bacteria</taxon>
        <taxon>Pseudomonadati</taxon>
        <taxon>Pseudomonadota</taxon>
        <taxon>Gammaproteobacteria</taxon>
        <taxon>Enterobacterales</taxon>
        <taxon>Enterobacteriaceae</taxon>
        <taxon>Shigella</taxon>
    </lineage>
</organism>